<sequence length="72" mass="8477">MIIPWQQLEPETLLNLIESFVLREGTDYGEDEKSLEQKVANIRHQLERGDVMLVWSELHESVNIVPKEMFHS</sequence>
<name>Y398_PHOLL</name>
<proteinExistence type="inferred from homology"/>
<comment type="similarity">
    <text evidence="1">Belongs to the UPF0270 family.</text>
</comment>
<evidence type="ECO:0000255" key="1">
    <source>
        <dbReference type="HAMAP-Rule" id="MF_00690"/>
    </source>
</evidence>
<dbReference type="EMBL" id="BX571860">
    <property type="protein sequence ID" value="CAE12693.1"/>
    <property type="molecule type" value="Genomic_DNA"/>
</dbReference>
<dbReference type="RefSeq" id="WP_011144784.1">
    <property type="nucleotide sequence ID" value="NC_005126.1"/>
</dbReference>
<dbReference type="SMR" id="Q7N9E2"/>
<dbReference type="STRING" id="243265.plu0398"/>
<dbReference type="GeneID" id="48846683"/>
<dbReference type="KEGG" id="plu:plu0398"/>
<dbReference type="eggNOG" id="COG3089">
    <property type="taxonomic scope" value="Bacteria"/>
</dbReference>
<dbReference type="HOGENOM" id="CLU_186759_1_0_6"/>
<dbReference type="OrthoDB" id="6120729at2"/>
<dbReference type="Proteomes" id="UP000002514">
    <property type="component" value="Chromosome"/>
</dbReference>
<dbReference type="Gene3D" id="1.10.10.610">
    <property type="entry name" value="YehU-like"/>
    <property type="match status" value="1"/>
</dbReference>
<dbReference type="HAMAP" id="MF_00690">
    <property type="entry name" value="UPF0270"/>
    <property type="match status" value="1"/>
</dbReference>
<dbReference type="InterPro" id="IPR010648">
    <property type="entry name" value="UPF0270"/>
</dbReference>
<dbReference type="InterPro" id="IPR036685">
    <property type="entry name" value="YehU-like_sf"/>
</dbReference>
<dbReference type="NCBIfam" id="NF003438">
    <property type="entry name" value="PRK04966.1"/>
    <property type="match status" value="1"/>
</dbReference>
<dbReference type="Pfam" id="PF06794">
    <property type="entry name" value="UPF0270"/>
    <property type="match status" value="1"/>
</dbReference>
<dbReference type="PIRSF" id="PIRSF006169">
    <property type="entry name" value="UCP006169"/>
    <property type="match status" value="1"/>
</dbReference>
<dbReference type="SUPFAM" id="SSF118001">
    <property type="entry name" value="YehU-like"/>
    <property type="match status" value="1"/>
</dbReference>
<protein>
    <recommendedName>
        <fullName evidence="1">UPF0270 protein plu0398</fullName>
    </recommendedName>
</protein>
<gene>
    <name type="ordered locus">plu0398</name>
</gene>
<feature type="chain" id="PRO_0000214853" description="UPF0270 protein plu0398">
    <location>
        <begin position="1"/>
        <end position="72"/>
    </location>
</feature>
<keyword id="KW-1185">Reference proteome</keyword>
<reference key="1">
    <citation type="journal article" date="2003" name="Nat. Biotechnol.">
        <title>The genome sequence of the entomopathogenic bacterium Photorhabdus luminescens.</title>
        <authorList>
            <person name="Duchaud E."/>
            <person name="Rusniok C."/>
            <person name="Frangeul L."/>
            <person name="Buchrieser C."/>
            <person name="Givaudan A."/>
            <person name="Taourit S."/>
            <person name="Bocs S."/>
            <person name="Boursaux-Eude C."/>
            <person name="Chandler M."/>
            <person name="Charles J.-F."/>
            <person name="Dassa E."/>
            <person name="Derose R."/>
            <person name="Derzelle S."/>
            <person name="Freyssinet G."/>
            <person name="Gaudriault S."/>
            <person name="Medigue C."/>
            <person name="Lanois A."/>
            <person name="Powell K."/>
            <person name="Siguier P."/>
            <person name="Vincent R."/>
            <person name="Wingate V."/>
            <person name="Zouine M."/>
            <person name="Glaser P."/>
            <person name="Boemare N."/>
            <person name="Danchin A."/>
            <person name="Kunst F."/>
        </authorList>
    </citation>
    <scope>NUCLEOTIDE SEQUENCE [LARGE SCALE GENOMIC DNA]</scope>
    <source>
        <strain>DSM 15139 / CIP 105565 / TT01</strain>
    </source>
</reference>
<accession>Q7N9E2</accession>
<organism>
    <name type="scientific">Photorhabdus laumondii subsp. laumondii (strain DSM 15139 / CIP 105565 / TT01)</name>
    <name type="common">Photorhabdus luminescens subsp. laumondii</name>
    <dbReference type="NCBI Taxonomy" id="243265"/>
    <lineage>
        <taxon>Bacteria</taxon>
        <taxon>Pseudomonadati</taxon>
        <taxon>Pseudomonadota</taxon>
        <taxon>Gammaproteobacteria</taxon>
        <taxon>Enterobacterales</taxon>
        <taxon>Morganellaceae</taxon>
        <taxon>Photorhabdus</taxon>
    </lineage>
</organism>